<keyword id="KW-1003">Cell membrane</keyword>
<keyword id="KW-1015">Disulfide bond</keyword>
<keyword id="KW-0297">G-protein coupled receptor</keyword>
<keyword id="KW-0325">Glycoprotein</keyword>
<keyword id="KW-0472">Membrane</keyword>
<keyword id="KW-0675">Receptor</keyword>
<keyword id="KW-1185">Reference proteome</keyword>
<keyword id="KW-0807">Transducer</keyword>
<keyword id="KW-0812">Transmembrane</keyword>
<keyword id="KW-1133">Transmembrane helix</keyword>
<gene>
    <name type="primary">Sucnr1</name>
    <name type="synonym">Gpr91</name>
</gene>
<protein>
    <recommendedName>
        <fullName>Succinate receptor 1</fullName>
    </recommendedName>
    <alternativeName>
        <fullName>G-protein coupled receptor 91</fullName>
    </alternativeName>
</protein>
<reference key="1">
    <citation type="journal article" date="2001" name="J. Mol. Biol.">
        <title>An expressed sequence tag (EST) data mining strategy succeeding in the discovery of new G-protein coupled receptors.</title>
        <authorList>
            <person name="Wittenberger T."/>
            <person name="Schaller H.C."/>
            <person name="Hellebrand S."/>
        </authorList>
    </citation>
    <scope>NUCLEOTIDE SEQUENCE [MRNA]</scope>
    <scope>TISSUE SPECIFICITY</scope>
    <source>
        <strain>C57BL/6J</strain>
    </source>
</reference>
<reference key="2">
    <citation type="journal article" date="2004" name="Genome Res.">
        <title>The status, quality, and expansion of the NIH full-length cDNA project: the Mammalian Gene Collection (MGC).</title>
        <authorList>
            <consortium name="The MGC Project Team"/>
        </authorList>
    </citation>
    <scope>NUCLEOTIDE SEQUENCE [LARGE SCALE MRNA]</scope>
    <source>
        <strain>C57BL/6J</strain>
        <tissue>Mammary gland</tissue>
    </source>
</reference>
<reference key="3">
    <citation type="journal article" date="2004" name="Nature">
        <title>Citric acid cycle intermediates as ligands for orphan G-protein-coupled receptors.</title>
        <authorList>
            <person name="He W."/>
            <person name="Miao F.J.-P."/>
            <person name="Lin D.C.-H."/>
            <person name="Schwandner R.T."/>
            <person name="Wang Z."/>
            <person name="Gao J."/>
            <person name="Chen J.-L."/>
            <person name="Tian H."/>
            <person name="Ling L."/>
        </authorList>
    </citation>
    <scope>FUNCTION</scope>
    <scope>TISSUE SPECIFICITY</scope>
    <scope>DISRUPTION PHENOTYPE</scope>
    <source>
        <strain>BALB/cJ</strain>
    </source>
</reference>
<reference key="4">
    <citation type="journal article" date="2008" name="Nat. Immunol.">
        <title>Triggering the succinate receptor GPR91 on dendritic cells enhances immunity.</title>
        <authorList>
            <person name="Rubic T."/>
            <person name="Lametschwandtner G."/>
            <person name="Jost S."/>
            <person name="Hinteregger S."/>
            <person name="Kund J."/>
            <person name="Carballido-Perrig N."/>
            <person name="Schwaerzler C."/>
            <person name="Junt T."/>
            <person name="Voshol H."/>
            <person name="Meingassner J.G."/>
            <person name="Mao X."/>
            <person name="Werner G."/>
            <person name="Rot A."/>
            <person name="Carballido J.M."/>
        </authorList>
    </citation>
    <scope>FUNCTION IN DENDRITIC CELLS</scope>
    <scope>TISSUE SPECIFICITY</scope>
    <scope>DISRUPTION PHENOTYPE</scope>
</reference>
<reference key="5">
    <citation type="journal article" date="2016" name="J. Exp. Med.">
        <title>GPR91 senses extracellular succinate released from inflammatory macrophages and exacerbates rheumatoid arthritis.</title>
        <authorList>
            <person name="Littlewood-Evans A."/>
            <person name="Sarret S."/>
            <person name="Apfel V."/>
            <person name="Loesle P."/>
            <person name="Dawson J."/>
            <person name="Zhang J."/>
            <person name="Muller A."/>
            <person name="Tigani B."/>
            <person name="Kneuer R."/>
            <person name="Patel S."/>
            <person name="Valeaux S."/>
            <person name="Gommermann N."/>
            <person name="Rubic-Schneider T."/>
            <person name="Junt T."/>
            <person name="Carballido J.M."/>
        </authorList>
    </citation>
    <scope>FUNCTION IN MACROPHAGES</scope>
</reference>
<reference key="6">
    <citation type="journal article" date="2018" name="Proc. Natl. Acad. Sci. U.S.A.">
        <title>Activation of intestinal tuft cell-expressed Sucnr1 triggers type 2 immunity in the mouse small intestine.</title>
        <authorList>
            <person name="Lei W."/>
            <person name="Ren W."/>
            <person name="Ohmoto M."/>
            <person name="Urban J.F. Jr."/>
            <person name="Matsumoto I."/>
            <person name="Margolskee R.F."/>
            <person name="Jiang P."/>
        </authorList>
    </citation>
    <scope>FUNCTION IN TUFT CELLS</scope>
    <scope>TISSUE SPECIFICITY</scope>
    <scope>DISRUPTION PHENOTYPE</scope>
    <scope>SUBCELLULAR LOCATION</scope>
</reference>
<reference key="7">
    <citation type="journal article" date="2019" name="Nat. Immunol.">
        <title>SUCNR1 controls an anti-inflammatory program in macrophages to regulate the metabolic response to obesity.</title>
        <authorList>
            <person name="Keiran N."/>
            <person name="Ceperuelo-Mallafre V."/>
            <person name="Calvo E."/>
            <person name="Hernandez-Alvarez M.I."/>
            <person name="Ejarque M."/>
            <person name="Nunez-Roa C."/>
            <person name="Horrillo D."/>
            <person name="Maymo-Masip E."/>
            <person name="Rodriguez M.M."/>
            <person name="Fradera R."/>
            <person name="de la Rosa J.V."/>
            <person name="Jorba R."/>
            <person name="Megia A."/>
            <person name="Zorzano A."/>
            <person name="Medina-Gomez G."/>
            <person name="Serena C."/>
            <person name="Castrillo A."/>
            <person name="Vendrell J."/>
            <person name="Fernandez-Veledo S."/>
        </authorList>
    </citation>
    <scope>FUNCTION IN MACROPHAGES</scope>
    <scope>DISRUPTION PHENOTYPE</scope>
</reference>
<reference key="8">
    <citation type="journal article" date="2020" name="Cell">
        <title>pH-gated succinate secretion regulates muscle remodeling in response to exercise.</title>
        <authorList>
            <person name="Reddy A."/>
            <person name="Bozi L.H.M."/>
            <person name="Yaghi O.K."/>
            <person name="Mills E.L."/>
            <person name="Xiao H."/>
            <person name="Nicholson H.E."/>
            <person name="Paschini M."/>
            <person name="Paulo J.A."/>
            <person name="Garrity R."/>
            <person name="Laznik-Bogoslavski D."/>
            <person name="Ferreira J.C.B."/>
            <person name="Carl C.S."/>
            <person name="Sjoeberg K.A."/>
            <person name="Wojtaszewski J.F.P."/>
            <person name="Jeppesen J.F."/>
            <person name="Kiens B."/>
            <person name="Gygi S.P."/>
            <person name="Richter E.A."/>
            <person name="Mathis D."/>
            <person name="Chouchani E.T."/>
        </authorList>
    </citation>
    <scope>FUNCTION IN MUSCLE</scope>
    <scope>TISSUE SPECIFICITY</scope>
</reference>
<reference key="9">
    <citation type="journal article" date="2023" name="Cell Metab.">
        <title>SUCNR1 signaling in adipocytes controls energy metabolism by modulating circadian clock and leptin expression.</title>
        <authorList>
            <person name="Villanueva-Carmona T."/>
            <person name="Cedo L."/>
            <person name="Madeira A."/>
            <person name="Ceperuelo-Mallafre V."/>
            <person name="Rodriguez-Pena M.M."/>
            <person name="Nunez-Roa C."/>
            <person name="Maymo-Masip E."/>
            <person name="Repolles-de-Dalmau M."/>
            <person name="Badia J."/>
            <person name="Keiran N."/>
            <person name="Mirasierra M."/>
            <person name="Pimenta-Lopes C."/>
            <person name="Sabadell-Basallote J."/>
            <person name="Bosch R."/>
            <person name="Caubet L."/>
            <person name="Escola-Gil J.C."/>
            <person name="Fernandez-Real J.M."/>
            <person name="Vilarrasa N."/>
            <person name="Ventura F."/>
            <person name="Vallejo M."/>
            <person name="Vendrell J."/>
            <person name="Fernandez-Veledo S."/>
        </authorList>
    </citation>
    <scope>FUNCTION IN ADIPOCYTES</scope>
    <scope>DISRUPTION PHENOTYPE</scope>
</reference>
<sequence length="317" mass="36765">MAQNLSCENWLATEAILNKYYLSAFYAIEFIFGLLGNVTVVFGYLFCMKNWNSSNVYLFNLSISDFAFLCTLPILIKSYANDKGTYGDVLCISNRYVLHTNLYTSILFLTFISMDRYLLMKYPFREHFLQKKEFAILISLAVWALVTLEVLPMLTFINSVPKEEGSNCIDYASSGNPEHNLIYSLCLTLLGFLIPLSVMCFFYYKMVVFLKRRSQQQATALPLDKPQRLVVLAVVIFSILFTPYHIMRNLRIASRLDSWPQGCTQKAIKSIYTLTRPLAFLNSAINPIFYFLMGDHYREMLISKFRQYFKSLTSFRT</sequence>
<proteinExistence type="evidence at protein level"/>
<comment type="function">
    <text evidence="1 2 6 7 8 9 10 11 12">G protein-coupled receptor for succinate able to mediate signaling through Gq/GNAQ or Gi/GNAI second messengers depending on the cell type and the processes regulated (PubMed:15141213). Succinate-SUCNR1 signaling serves as a link between metabolic stress, inflammation and energy homeostasis (PubMed:18820681, PubMed:27481132, PubMed:29735652, PubMed:30962591). In macrophages, plays a range of immune-regulatory roles. During inflammation, succinate-SUCNR1 signaling may act as an anti-inflammatory mediator or boost inflammation depending on the inflammatory status of cells (PubMed:27481132, PubMed:30962591). Hyperpolarizes M2 macrophages versus M1 phenotype through Gq signaling by regulating the transcription of genes involved in immune function (By similarity). In activated M1 macrophages, plays a pro-inflammatory role in response to LPS (PubMed:27481132). Expressed in dendritic cells, where it is involved in the sensing of immunological danger and enhances immunity. Mediates succinate triggered intracelleular calcium mobilization, induces migratory responses and acts in synergy with Toll-like receptor ligands for the production of proinflammatory cytokines as well as an enhancement of antigen-specific activation of helper T cells (PubMed:18820681). In the small intestine, mediates the activation of tuft cells by dietary succinate and triggers type 2 immunity (PubMed:29735652). In adipocytes, plays an important role in the control of energy metabolism. In response to succinate, controls leptin expression in an AMPK-JNK-CEBPA-dependent as well as circadian clock-regulated manner (PubMed:36977414). In muscle tissue, is expressed in non-muscle cells and coordinates muscle remodeling in response to the succinate produced during exercise training in a paracrine manner (PubMed:32946811). In retina, acts as a mediator of vessel growth during retinal development. In response to succinate, regulates the production of angiogenic factors, including VEGF, by retinal ganglion neurons (By similarity).</text>
</comment>
<comment type="subcellular location">
    <subcellularLocation>
        <location evidence="14">Cell membrane</location>
        <topology evidence="3">Multi-pass membrane protein</topology>
    </subcellularLocation>
</comment>
<comment type="tissue specificity">
    <text evidence="5 6 7 8 9 11">Predominantly expressed in the kidney (proximal and distal tubules and the juxtaglomerular apparatus). Weakly expressed in liver, spleen and small intestine. Highly expressed in immature dendritic cells, expression rapidly downregulates after maturation. Also expressed in macrophages (PubMed:18820681, PubMed:27481132). Specifically expressed in intestinal tuft cells (PubMed:29735652). Expression in whole muscle is attributable to major non-myofibrillar resident cell types, including stromal, endothelial and satellite cell populations (PubMed:32946811).</text>
</comment>
<comment type="induction">
    <text evidence="8">Expression in activated M1 macrophages is induced by LPS as well as IL1B.</text>
</comment>
<comment type="disruption phenotype">
    <text evidence="6 7 8 9 12">Abolition of succinate-induced hypertension (PubMed:15141213). Mutants have less migration of Langerhans cells to draining lymph nodes and impaired tetanus toxoid-specific recall T cell responses (PubMed:18820681). Mutants show dimished immune responses to microbiota-derived succinate but respond normally to parasitic worm Nippostrongylus brasiliensis (PubMed:29735652). Conditional knockouts for adipose tissue show a higher body wight but have a total amount of white adipose tissue significantly lower than wild-types, whereas muscle mass is similar. They also have better glucose tolerance and insulin sensitivity. Upon high fat diet, mutants develop hepatic steatosis and glucose intolerance (PubMed:36977414). Myeloid conditional knockouts have adipose-tissue inflammation and glucose intolerance. They show an exacerbated diet-induced obesity (PubMed:27481132).</text>
</comment>
<comment type="similarity">
    <text evidence="4">Belongs to the G-protein coupled receptor 1 family.</text>
</comment>
<evidence type="ECO:0000250" key="1">
    <source>
        <dbReference type="UniProtKB" id="Q6IYF9"/>
    </source>
</evidence>
<evidence type="ECO:0000250" key="2">
    <source>
        <dbReference type="UniProtKB" id="Q9BXA5"/>
    </source>
</evidence>
<evidence type="ECO:0000255" key="3"/>
<evidence type="ECO:0000255" key="4">
    <source>
        <dbReference type="PROSITE-ProRule" id="PRU00521"/>
    </source>
</evidence>
<evidence type="ECO:0000269" key="5">
    <source>
    </source>
</evidence>
<evidence type="ECO:0000269" key="6">
    <source>
    </source>
</evidence>
<evidence type="ECO:0000269" key="7">
    <source>
    </source>
</evidence>
<evidence type="ECO:0000269" key="8">
    <source>
    </source>
</evidence>
<evidence type="ECO:0000269" key="9">
    <source>
    </source>
</evidence>
<evidence type="ECO:0000269" key="10">
    <source>
    </source>
</evidence>
<evidence type="ECO:0000269" key="11">
    <source>
    </source>
</evidence>
<evidence type="ECO:0000269" key="12">
    <source>
    </source>
</evidence>
<evidence type="ECO:0000305" key="13"/>
<evidence type="ECO:0000305" key="14">
    <source>
    </source>
</evidence>
<name>SUCR1_MOUSE</name>
<accession>Q99MT6</accession>
<accession>Q4V9V9</accession>
<feature type="chain" id="PRO_0000070135" description="Succinate receptor 1">
    <location>
        <begin position="1"/>
        <end position="317"/>
    </location>
</feature>
<feature type="topological domain" description="Extracellular" evidence="3">
    <location>
        <begin position="1"/>
        <end position="23"/>
    </location>
</feature>
<feature type="transmembrane region" description="Helical; Name=1" evidence="3">
    <location>
        <begin position="24"/>
        <end position="47"/>
    </location>
</feature>
<feature type="topological domain" description="Cytoplasmic" evidence="3">
    <location>
        <begin position="48"/>
        <end position="55"/>
    </location>
</feature>
<feature type="transmembrane region" description="Helical; Name=2" evidence="3">
    <location>
        <begin position="56"/>
        <end position="76"/>
    </location>
</feature>
<feature type="topological domain" description="Extracellular" evidence="3">
    <location>
        <begin position="77"/>
        <end position="101"/>
    </location>
</feature>
<feature type="transmembrane region" description="Helical; Name=3" evidence="3">
    <location>
        <begin position="102"/>
        <end position="119"/>
    </location>
</feature>
<feature type="topological domain" description="Cytoplasmic" evidence="3">
    <location>
        <begin position="120"/>
        <end position="133"/>
    </location>
</feature>
<feature type="transmembrane region" description="Helical; Name=4" evidence="3">
    <location>
        <begin position="134"/>
        <end position="157"/>
    </location>
</feature>
<feature type="topological domain" description="Extracellular" evidence="3">
    <location>
        <begin position="158"/>
        <end position="180"/>
    </location>
</feature>
<feature type="transmembrane region" description="Helical; Name=5" evidence="3">
    <location>
        <begin position="181"/>
        <end position="204"/>
    </location>
</feature>
<feature type="topological domain" description="Cytoplasmic" evidence="3">
    <location>
        <begin position="205"/>
        <end position="228"/>
    </location>
</feature>
<feature type="transmembrane region" description="Helical; Name=6" evidence="3">
    <location>
        <begin position="229"/>
        <end position="246"/>
    </location>
</feature>
<feature type="topological domain" description="Extracellular" evidence="3">
    <location>
        <begin position="247"/>
        <end position="277"/>
    </location>
</feature>
<feature type="transmembrane region" description="Helical; Name=7" evidence="3">
    <location>
        <begin position="278"/>
        <end position="294"/>
    </location>
</feature>
<feature type="topological domain" description="Cytoplasmic" evidence="3">
    <location>
        <begin position="295"/>
        <end position="317"/>
    </location>
</feature>
<feature type="glycosylation site" description="N-linked (GlcNAc...) asparagine" evidence="3">
    <location>
        <position position="4"/>
    </location>
</feature>
<feature type="disulfide bond" evidence="4">
    <location>
        <begin position="91"/>
        <end position="168"/>
    </location>
</feature>
<feature type="sequence conflict" description="In Ref. 1; AAK01867." evidence="13" ref="1">
    <original>I</original>
    <variation>M</variation>
    <location>
        <position position="106"/>
    </location>
</feature>
<feature type="sequence conflict" description="In Ref. 1; AAK01867." evidence="13" ref="1">
    <original>F</original>
    <variation>L</variation>
    <location>
        <position position="108"/>
    </location>
</feature>
<feature type="sequence conflict" description="In Ref. 1; AAK01867." evidence="13" ref="1">
    <original>F</original>
    <variation>V</variation>
    <location>
        <position position="111"/>
    </location>
</feature>
<organism>
    <name type="scientific">Mus musculus</name>
    <name type="common">Mouse</name>
    <dbReference type="NCBI Taxonomy" id="10090"/>
    <lineage>
        <taxon>Eukaryota</taxon>
        <taxon>Metazoa</taxon>
        <taxon>Chordata</taxon>
        <taxon>Craniata</taxon>
        <taxon>Vertebrata</taxon>
        <taxon>Euteleostomi</taxon>
        <taxon>Mammalia</taxon>
        <taxon>Eutheria</taxon>
        <taxon>Euarchontoglires</taxon>
        <taxon>Glires</taxon>
        <taxon>Rodentia</taxon>
        <taxon>Myomorpha</taxon>
        <taxon>Muroidea</taxon>
        <taxon>Muridae</taxon>
        <taxon>Murinae</taxon>
        <taxon>Mus</taxon>
        <taxon>Mus</taxon>
    </lineage>
</organism>
<dbReference type="EMBL" id="AF295367">
    <property type="protein sequence ID" value="AAK01867.1"/>
    <property type="molecule type" value="mRNA"/>
</dbReference>
<dbReference type="EMBL" id="BC096665">
    <property type="protein sequence ID" value="AAH96665.1"/>
    <property type="molecule type" value="mRNA"/>
</dbReference>
<dbReference type="CCDS" id="CCDS38442.1"/>
<dbReference type="RefSeq" id="NP_115776.2">
    <property type="nucleotide sequence ID" value="NM_032400.2"/>
</dbReference>
<dbReference type="SMR" id="Q99MT6"/>
<dbReference type="FunCoup" id="Q99MT6">
    <property type="interactions" value="646"/>
</dbReference>
<dbReference type="STRING" id="10090.ENSMUSP00000029326"/>
<dbReference type="BindingDB" id="Q99MT6"/>
<dbReference type="ChEMBL" id="CHEMBL4739861"/>
<dbReference type="GlyCosmos" id="Q99MT6">
    <property type="glycosylation" value="1 site, No reported glycans"/>
</dbReference>
<dbReference type="GlyGen" id="Q99MT6">
    <property type="glycosylation" value="1 site"/>
</dbReference>
<dbReference type="iPTMnet" id="Q99MT6"/>
<dbReference type="PhosphoSitePlus" id="Q99MT6"/>
<dbReference type="PaxDb" id="10090-ENSMUSP00000029326"/>
<dbReference type="ProteomicsDB" id="257373"/>
<dbReference type="Antibodypedia" id="18315">
    <property type="antibodies" value="258 antibodies from 29 providers"/>
</dbReference>
<dbReference type="DNASU" id="84112"/>
<dbReference type="Ensembl" id="ENSMUST00000029326.6">
    <property type="protein sequence ID" value="ENSMUSP00000029326.6"/>
    <property type="gene ID" value="ENSMUSG00000027762.7"/>
</dbReference>
<dbReference type="GeneID" id="84112"/>
<dbReference type="KEGG" id="mmu:84112"/>
<dbReference type="UCSC" id="uc008pja.2">
    <property type="organism name" value="mouse"/>
</dbReference>
<dbReference type="AGR" id="MGI:1934135"/>
<dbReference type="CTD" id="56670"/>
<dbReference type="MGI" id="MGI:1934135">
    <property type="gene designation" value="Sucnr1"/>
</dbReference>
<dbReference type="VEuPathDB" id="HostDB:ENSMUSG00000027762"/>
<dbReference type="eggNOG" id="ENOG502QVWP">
    <property type="taxonomic scope" value="Eukaryota"/>
</dbReference>
<dbReference type="GeneTree" id="ENSGT01030000234621"/>
<dbReference type="HOGENOM" id="CLU_009579_8_2_1"/>
<dbReference type="InParanoid" id="Q99MT6"/>
<dbReference type="OMA" id="YYKIALF"/>
<dbReference type="OrthoDB" id="9927220at2759"/>
<dbReference type="PhylomeDB" id="Q99MT6"/>
<dbReference type="TreeFam" id="TF350009"/>
<dbReference type="Reactome" id="R-MMU-373076">
    <property type="pathway name" value="Class A/1 (Rhodopsin-like receptors)"/>
</dbReference>
<dbReference type="Reactome" id="R-MMU-418594">
    <property type="pathway name" value="G alpha (i) signalling events"/>
</dbReference>
<dbReference type="BioGRID-ORCS" id="84112">
    <property type="hits" value="2 hits in 77 CRISPR screens"/>
</dbReference>
<dbReference type="PRO" id="PR:Q99MT6"/>
<dbReference type="Proteomes" id="UP000000589">
    <property type="component" value="Chromosome 3"/>
</dbReference>
<dbReference type="RNAct" id="Q99MT6">
    <property type="molecule type" value="protein"/>
</dbReference>
<dbReference type="Bgee" id="ENSMUSG00000027762">
    <property type="expression patterns" value="Expressed in white adipose tissue and 49 other cell types or tissues"/>
</dbReference>
<dbReference type="GO" id="GO:0009986">
    <property type="term" value="C:cell surface"/>
    <property type="evidence" value="ECO:0000304"/>
    <property type="project" value="MGI"/>
</dbReference>
<dbReference type="GO" id="GO:0005886">
    <property type="term" value="C:plasma membrane"/>
    <property type="evidence" value="ECO:0000250"/>
    <property type="project" value="UniProtKB"/>
</dbReference>
<dbReference type="GO" id="GO:0004930">
    <property type="term" value="F:G protein-coupled receptor activity"/>
    <property type="evidence" value="ECO:0000314"/>
    <property type="project" value="UniProtKB"/>
</dbReference>
<dbReference type="GO" id="GO:0038023">
    <property type="term" value="F:signaling receptor activity"/>
    <property type="evidence" value="ECO:0000314"/>
    <property type="project" value="MGI"/>
</dbReference>
<dbReference type="GO" id="GO:0097009">
    <property type="term" value="P:energy homeostasis"/>
    <property type="evidence" value="ECO:0000314"/>
    <property type="project" value="UniProt"/>
</dbReference>
<dbReference type="GO" id="GO:0007186">
    <property type="term" value="P:G protein-coupled receptor signaling pathway"/>
    <property type="evidence" value="ECO:0000314"/>
    <property type="project" value="UniProtKB"/>
</dbReference>
<dbReference type="GO" id="GO:0042593">
    <property type="term" value="P:glucose homeostasis"/>
    <property type="evidence" value="ECO:0000315"/>
    <property type="project" value="MGI"/>
</dbReference>
<dbReference type="GO" id="GO:0002281">
    <property type="term" value="P:macrophage activation involved in immune response"/>
    <property type="evidence" value="ECO:0000315"/>
    <property type="project" value="MGI"/>
</dbReference>
<dbReference type="GO" id="GO:0050921">
    <property type="term" value="P:positive regulation of chemotaxis"/>
    <property type="evidence" value="ECO:0000315"/>
    <property type="project" value="MGI"/>
</dbReference>
<dbReference type="GO" id="GO:0050729">
    <property type="term" value="P:positive regulation of inflammatory response"/>
    <property type="evidence" value="ECO:0000315"/>
    <property type="project" value="MGI"/>
</dbReference>
<dbReference type="GO" id="GO:0060177">
    <property type="term" value="P:regulation of angiotensin metabolic process"/>
    <property type="evidence" value="ECO:0000315"/>
    <property type="project" value="MGI"/>
</dbReference>
<dbReference type="GO" id="GO:0002001">
    <property type="term" value="P:renin secretion into blood stream"/>
    <property type="evidence" value="ECO:0000315"/>
    <property type="project" value="MGI"/>
</dbReference>
<dbReference type="GO" id="GO:0051592">
    <property type="term" value="P:response to calcium ion"/>
    <property type="evidence" value="ECO:0000315"/>
    <property type="project" value="MGI"/>
</dbReference>
<dbReference type="FunFam" id="1.20.1070.10:FF:000285">
    <property type="entry name" value="Succinate receptor 1"/>
    <property type="match status" value="1"/>
</dbReference>
<dbReference type="Gene3D" id="1.20.1070.10">
    <property type="entry name" value="Rhodopsin 7-helix transmembrane proteins"/>
    <property type="match status" value="1"/>
</dbReference>
<dbReference type="InterPro" id="IPR000276">
    <property type="entry name" value="GPCR_Rhodpsn"/>
</dbReference>
<dbReference type="InterPro" id="IPR017452">
    <property type="entry name" value="GPCR_Rhodpsn_7TM"/>
</dbReference>
<dbReference type="PANTHER" id="PTHR24231">
    <property type="entry name" value="PURINOCEPTOR-RELATED G-PROTEIN COUPLED RECEPTOR"/>
    <property type="match status" value="1"/>
</dbReference>
<dbReference type="PANTHER" id="PTHR24231:SF14">
    <property type="entry name" value="SUCCINATE RECEPTOR 1"/>
    <property type="match status" value="1"/>
</dbReference>
<dbReference type="Pfam" id="PF00001">
    <property type="entry name" value="7tm_1"/>
    <property type="match status" value="1"/>
</dbReference>
<dbReference type="PRINTS" id="PR00237">
    <property type="entry name" value="GPCRRHODOPSN"/>
</dbReference>
<dbReference type="PRINTS" id="PR01157">
    <property type="entry name" value="P2YPURNOCPTR"/>
</dbReference>
<dbReference type="SUPFAM" id="SSF81321">
    <property type="entry name" value="Family A G protein-coupled receptor-like"/>
    <property type="match status" value="1"/>
</dbReference>
<dbReference type="PROSITE" id="PS00237">
    <property type="entry name" value="G_PROTEIN_RECEP_F1_1"/>
    <property type="match status" value="1"/>
</dbReference>
<dbReference type="PROSITE" id="PS50262">
    <property type="entry name" value="G_PROTEIN_RECEP_F1_2"/>
    <property type="match status" value="1"/>
</dbReference>